<protein>
    <recommendedName>
        <fullName evidence="1">ATP synthase subunit c</fullName>
    </recommendedName>
    <alternativeName>
        <fullName evidence="1">ATP synthase F(0) sector subunit c</fullName>
    </alternativeName>
    <alternativeName>
        <fullName evidence="1">F-type ATPase subunit c</fullName>
        <shortName evidence="1">F-ATPase subunit c</shortName>
    </alternativeName>
    <alternativeName>
        <fullName evidence="1">Lipid-binding protein</fullName>
    </alternativeName>
</protein>
<dbReference type="EMBL" id="CP000116">
    <property type="protein sequence ID" value="AAZ98755.1"/>
    <property type="molecule type" value="Genomic_DNA"/>
</dbReference>
<dbReference type="RefSeq" id="WP_011313314.1">
    <property type="nucleotide sequence ID" value="NC_007404.1"/>
</dbReference>
<dbReference type="SMR" id="Q3SF61"/>
<dbReference type="STRING" id="292415.Tbd_2802"/>
<dbReference type="KEGG" id="tbd:Tbd_2802"/>
<dbReference type="eggNOG" id="ENOG5032S3K">
    <property type="taxonomic scope" value="Bacteria"/>
</dbReference>
<dbReference type="HOGENOM" id="CLU_148047_1_0_4"/>
<dbReference type="Proteomes" id="UP000008291">
    <property type="component" value="Chromosome"/>
</dbReference>
<dbReference type="GO" id="GO:0005886">
    <property type="term" value="C:plasma membrane"/>
    <property type="evidence" value="ECO:0007669"/>
    <property type="project" value="UniProtKB-SubCell"/>
</dbReference>
<dbReference type="GO" id="GO:0045259">
    <property type="term" value="C:proton-transporting ATP synthase complex"/>
    <property type="evidence" value="ECO:0007669"/>
    <property type="project" value="UniProtKB-KW"/>
</dbReference>
<dbReference type="GO" id="GO:0033177">
    <property type="term" value="C:proton-transporting two-sector ATPase complex, proton-transporting domain"/>
    <property type="evidence" value="ECO:0007669"/>
    <property type="project" value="InterPro"/>
</dbReference>
<dbReference type="GO" id="GO:0008289">
    <property type="term" value="F:lipid binding"/>
    <property type="evidence" value="ECO:0007669"/>
    <property type="project" value="UniProtKB-KW"/>
</dbReference>
<dbReference type="GO" id="GO:0046933">
    <property type="term" value="F:proton-transporting ATP synthase activity, rotational mechanism"/>
    <property type="evidence" value="ECO:0007669"/>
    <property type="project" value="UniProtKB-UniRule"/>
</dbReference>
<dbReference type="CDD" id="cd18185">
    <property type="entry name" value="ATP-synt_Fo_c_ATPE"/>
    <property type="match status" value="1"/>
</dbReference>
<dbReference type="FunFam" id="1.20.20.10:FF:000002">
    <property type="entry name" value="ATP synthase subunit c"/>
    <property type="match status" value="1"/>
</dbReference>
<dbReference type="Gene3D" id="1.20.20.10">
    <property type="entry name" value="F1F0 ATP synthase subunit C"/>
    <property type="match status" value="1"/>
</dbReference>
<dbReference type="HAMAP" id="MF_01396">
    <property type="entry name" value="ATP_synth_c_bact"/>
    <property type="match status" value="1"/>
</dbReference>
<dbReference type="InterPro" id="IPR005953">
    <property type="entry name" value="ATP_synth_csu_bac/chlpt"/>
</dbReference>
<dbReference type="InterPro" id="IPR000454">
    <property type="entry name" value="ATP_synth_F0_csu"/>
</dbReference>
<dbReference type="InterPro" id="IPR020537">
    <property type="entry name" value="ATP_synth_F0_csu_DDCD_BS"/>
</dbReference>
<dbReference type="InterPro" id="IPR038662">
    <property type="entry name" value="ATP_synth_F0_csu_sf"/>
</dbReference>
<dbReference type="InterPro" id="IPR002379">
    <property type="entry name" value="ATPase_proteolipid_c-like_dom"/>
</dbReference>
<dbReference type="InterPro" id="IPR035921">
    <property type="entry name" value="F/V-ATP_Csub_sf"/>
</dbReference>
<dbReference type="NCBIfam" id="TIGR01260">
    <property type="entry name" value="ATP_synt_c"/>
    <property type="match status" value="1"/>
</dbReference>
<dbReference type="NCBIfam" id="NF005363">
    <property type="entry name" value="PRK06876.1"/>
    <property type="match status" value="1"/>
</dbReference>
<dbReference type="Pfam" id="PF00137">
    <property type="entry name" value="ATP-synt_C"/>
    <property type="match status" value="1"/>
</dbReference>
<dbReference type="PRINTS" id="PR00124">
    <property type="entry name" value="ATPASEC"/>
</dbReference>
<dbReference type="SUPFAM" id="SSF81333">
    <property type="entry name" value="F1F0 ATP synthase subunit C"/>
    <property type="match status" value="1"/>
</dbReference>
<dbReference type="PROSITE" id="PS00605">
    <property type="entry name" value="ATPASE_C"/>
    <property type="match status" value="1"/>
</dbReference>
<accession>Q3SF61</accession>
<reference key="1">
    <citation type="journal article" date="2006" name="J. Bacteriol.">
        <title>The genome sequence of the obligately chemolithoautotrophic, facultatively anaerobic bacterium Thiobacillus denitrificans.</title>
        <authorList>
            <person name="Beller H.R."/>
            <person name="Chain P.S."/>
            <person name="Letain T.E."/>
            <person name="Chakicherla A."/>
            <person name="Larimer F.W."/>
            <person name="Richardson P.M."/>
            <person name="Coleman M.A."/>
            <person name="Wood A.P."/>
            <person name="Kelly D.P."/>
        </authorList>
    </citation>
    <scope>NUCLEOTIDE SEQUENCE [LARGE SCALE GENOMIC DNA]</scope>
    <source>
        <strain>ATCC 25259 / T1</strain>
    </source>
</reference>
<feature type="chain" id="PRO_1000184523" description="ATP synthase subunit c">
    <location>
        <begin position="1"/>
        <end position="79"/>
    </location>
</feature>
<feature type="transmembrane region" description="Helical" evidence="1">
    <location>
        <begin position="10"/>
        <end position="30"/>
    </location>
</feature>
<feature type="transmembrane region" description="Helical" evidence="1">
    <location>
        <begin position="52"/>
        <end position="72"/>
    </location>
</feature>
<feature type="site" description="Reversibly protonated during proton transport" evidence="1">
    <location>
        <position position="60"/>
    </location>
</feature>
<gene>
    <name evidence="1" type="primary">atpE</name>
    <name type="ordered locus">Tbd_2802</name>
</gene>
<proteinExistence type="inferred from homology"/>
<evidence type="ECO:0000255" key="1">
    <source>
        <dbReference type="HAMAP-Rule" id="MF_01396"/>
    </source>
</evidence>
<sequence>MEMTQAVLYIAGALMMGLGALGAAVGIGVLGGRFLEGAARQPELIPMLRTQFFIVMGLVDAVPMIAVGLAMYVLFAVAG</sequence>
<name>ATPL_THIDA</name>
<keyword id="KW-0066">ATP synthesis</keyword>
<keyword id="KW-0997">Cell inner membrane</keyword>
<keyword id="KW-1003">Cell membrane</keyword>
<keyword id="KW-0138">CF(0)</keyword>
<keyword id="KW-0375">Hydrogen ion transport</keyword>
<keyword id="KW-0406">Ion transport</keyword>
<keyword id="KW-0446">Lipid-binding</keyword>
<keyword id="KW-0472">Membrane</keyword>
<keyword id="KW-1185">Reference proteome</keyword>
<keyword id="KW-0812">Transmembrane</keyword>
<keyword id="KW-1133">Transmembrane helix</keyword>
<keyword id="KW-0813">Transport</keyword>
<comment type="function">
    <text evidence="1">F(1)F(0) ATP synthase produces ATP from ADP in the presence of a proton or sodium gradient. F-type ATPases consist of two structural domains, F(1) containing the extramembraneous catalytic core and F(0) containing the membrane proton channel, linked together by a central stalk and a peripheral stalk. During catalysis, ATP synthesis in the catalytic domain of F(1) is coupled via a rotary mechanism of the central stalk subunits to proton translocation.</text>
</comment>
<comment type="function">
    <text evidence="1">Key component of the F(0) channel; it plays a direct role in translocation across the membrane. A homomeric c-ring of between 10-14 subunits forms the central stalk rotor element with the F(1) delta and epsilon subunits.</text>
</comment>
<comment type="subunit">
    <text evidence="1">F-type ATPases have 2 components, F(1) - the catalytic core - and F(0) - the membrane proton channel. F(1) has five subunits: alpha(3), beta(3), gamma(1), delta(1), epsilon(1). F(0) has three main subunits: a(1), b(2) and c(10-14). The alpha and beta chains form an alternating ring which encloses part of the gamma chain. F(1) is attached to F(0) by a central stalk formed by the gamma and epsilon chains, while a peripheral stalk is formed by the delta and b chains.</text>
</comment>
<comment type="subcellular location">
    <subcellularLocation>
        <location evidence="1">Cell inner membrane</location>
        <topology evidence="1">Multi-pass membrane protein</topology>
    </subcellularLocation>
</comment>
<comment type="similarity">
    <text evidence="1">Belongs to the ATPase C chain family.</text>
</comment>
<organism>
    <name type="scientific">Thiobacillus denitrificans (strain ATCC 25259 / T1)</name>
    <dbReference type="NCBI Taxonomy" id="292415"/>
    <lineage>
        <taxon>Bacteria</taxon>
        <taxon>Pseudomonadati</taxon>
        <taxon>Pseudomonadota</taxon>
        <taxon>Betaproteobacteria</taxon>
        <taxon>Nitrosomonadales</taxon>
        <taxon>Thiobacillaceae</taxon>
        <taxon>Thiobacillus</taxon>
    </lineage>
</organism>